<organism>
    <name type="scientific">Escherichia phage P2</name>
    <name type="common">Bacteriophage P2</name>
    <dbReference type="NCBI Taxonomy" id="2905681"/>
    <lineage>
        <taxon>Viruses</taxon>
        <taxon>Duplodnaviria</taxon>
        <taxon>Heunggongvirae</taxon>
        <taxon>Uroviricota</taxon>
        <taxon>Caudoviricetes</taxon>
        <taxon>Peduoviridae</taxon>
        <taxon>Peduovirus</taxon>
        <taxon>Peduovirus P2</taxon>
    </lineage>
</organism>
<accession>P25476</accession>
<protein>
    <recommendedName>
        <fullName>Terminase, endonuclease subunit</fullName>
    </recommendedName>
    <alternativeName>
        <fullName>GpM</fullName>
    </alternativeName>
</protein>
<evidence type="ECO:0000255" key="1"/>
<evidence type="ECO:0000256" key="2">
    <source>
        <dbReference type="SAM" id="MobiDB-lite"/>
    </source>
</evidence>
<evidence type="ECO:0000305" key="3"/>
<comment type="function">
    <text>M protein is probably an endonuclease which directs cos cleavage. The Q, P and M proteins are needed to package DNA into proheads and for the conversion of proheads to capsids.</text>
</comment>
<comment type="similarity">
    <text evidence="3">To phage HP1 protein ORF19.</text>
</comment>
<reference key="1">
    <citation type="journal article" date="1991" name="Nucleic Acids Res.">
        <title>Nucleotide sequence of the DNA packaging and capsid synthesis genes of bacteriophage P2.</title>
        <authorList>
            <person name="Linderoth N.A."/>
            <person name="Ziermann R."/>
            <person name="Haggaard-Ljungquist E."/>
            <person name="Christie G.E."/>
            <person name="Calendar R."/>
        </authorList>
    </citation>
    <scope>NUCLEOTIDE SEQUENCE [GENOMIC DNA]</scope>
</reference>
<gene>
    <name type="primary">M</name>
</gene>
<dbReference type="EMBL" id="AF063097">
    <property type="protein sequence ID" value="AAD03272.1"/>
    <property type="molecule type" value="Genomic_DNA"/>
</dbReference>
<dbReference type="PIR" id="S22800">
    <property type="entry name" value="S22800"/>
</dbReference>
<dbReference type="RefSeq" id="NP_046761.1">
    <property type="nucleotide sequence ID" value="NC_001895.1"/>
</dbReference>
<dbReference type="SMR" id="P25476"/>
<dbReference type="GeneID" id="77440792"/>
<dbReference type="KEGG" id="vg:77440792"/>
<dbReference type="Proteomes" id="UP000009092">
    <property type="component" value="Genome"/>
</dbReference>
<dbReference type="GO" id="GO:0003677">
    <property type="term" value="F:DNA binding"/>
    <property type="evidence" value="ECO:0007669"/>
    <property type="project" value="UniProtKB-KW"/>
</dbReference>
<dbReference type="GO" id="GO:0004519">
    <property type="term" value="F:endonuclease activity"/>
    <property type="evidence" value="ECO:0007669"/>
    <property type="project" value="UniProtKB-KW"/>
</dbReference>
<dbReference type="GO" id="GO:0019069">
    <property type="term" value="P:viral capsid assembly"/>
    <property type="evidence" value="ECO:0007669"/>
    <property type="project" value="InterPro"/>
</dbReference>
<dbReference type="InterPro" id="IPR010270">
    <property type="entry name" value="Phage_P2_GpM"/>
</dbReference>
<dbReference type="Pfam" id="PF05944">
    <property type="entry name" value="Phage_term_smal"/>
    <property type="match status" value="1"/>
</dbReference>
<name>VPM_BPP2</name>
<organismHost>
    <name type="scientific">Enterobacteriaceae</name>
    <dbReference type="NCBI Taxonomy" id="543"/>
</organismHost>
<keyword id="KW-0238">DNA-binding</keyword>
<keyword id="KW-0255">Endonuclease</keyword>
<keyword id="KW-0378">Hydrolase</keyword>
<keyword id="KW-0540">Nuclease</keyword>
<keyword id="KW-1185">Reference proteome</keyword>
<keyword id="KW-0231">Viral genome packaging</keyword>
<keyword id="KW-1188">Viral release from host cell</keyword>
<feature type="chain" id="PRO_0000165256" description="Terminase, endonuclease subunit">
    <location>
        <begin position="1"/>
        <end position="247"/>
    </location>
</feature>
<feature type="DNA-binding region" evidence="1">
    <location>
        <begin position="214"/>
        <end position="245"/>
    </location>
</feature>
<feature type="region of interest" description="Disordered" evidence="2">
    <location>
        <begin position="209"/>
        <end position="247"/>
    </location>
</feature>
<feature type="compositionally biased region" description="Basic and acidic residues" evidence="2">
    <location>
        <begin position="209"/>
        <end position="219"/>
    </location>
</feature>
<feature type="compositionally biased region" description="Basic residues" evidence="2">
    <location>
        <begin position="227"/>
        <end position="247"/>
    </location>
</feature>
<sequence length="247" mass="27439">MTSPAQRHMMRVSAAMTAQREAAPLRHATVYEQMLVKLAADQRTLKAIYSKELKAAKKRELLPFWLPWVNGVLELGKGAQDDILMTVMLWRLDTGDIAGALEIARYALKYGLTMPGKHRRTPPYMFTEEVALAAMRAHAAGESVDTRLLTETLELTATADMPDEVRAKLHKITGLFLRDGGDAAGALAHLQRATQLDCQAGVKKEIERLERELKPKPEPQPKAATRAPRKTRSVTPAKRGRPKKKAS</sequence>
<proteinExistence type="predicted"/>